<accession>P20040</accession>
<feature type="signal peptide">
    <location>
        <begin position="1"/>
        <end position="26"/>
    </location>
</feature>
<feature type="chain" id="PRO_0000019002" description="H-2 class II histocompatibility antigen, E-Q beta chain">
    <location>
        <begin position="27"/>
        <end position="264"/>
    </location>
</feature>
<feature type="topological domain" description="Extracellular" evidence="1">
    <location>
        <begin position="27"/>
        <end position="225"/>
    </location>
</feature>
<feature type="transmembrane region" description="Helical" evidence="1">
    <location>
        <begin position="226"/>
        <end position="246"/>
    </location>
</feature>
<feature type="topological domain" description="Cytoplasmic" evidence="1">
    <location>
        <begin position="247"/>
        <end position="264"/>
    </location>
</feature>
<feature type="domain" description="Ig-like C1-type">
    <location>
        <begin position="124"/>
        <end position="214"/>
    </location>
</feature>
<feature type="region of interest" description="Beta-1">
    <location>
        <begin position="27"/>
        <end position="121"/>
    </location>
</feature>
<feature type="region of interest" description="Beta-2">
    <location>
        <begin position="122"/>
        <end position="225"/>
    </location>
</feature>
<feature type="glycosylation site" description="N-linked (GlcNAc...) asparagine" evidence="1">
    <location>
        <position position="46"/>
    </location>
</feature>
<feature type="disulfide bond" evidence="2">
    <location>
        <begin position="38"/>
        <end position="106"/>
    </location>
</feature>
<feature type="disulfide bond" evidence="2">
    <location>
        <begin position="144"/>
        <end position="200"/>
    </location>
</feature>
<keyword id="KW-1064">Adaptive immunity</keyword>
<keyword id="KW-1015">Disulfide bond</keyword>
<keyword id="KW-0325">Glycoprotein</keyword>
<keyword id="KW-0391">Immunity</keyword>
<keyword id="KW-0472">Membrane</keyword>
<keyword id="KW-0491">MHC II</keyword>
<keyword id="KW-1185">Reference proteome</keyword>
<keyword id="KW-0732">Signal</keyword>
<keyword id="KW-0812">Transmembrane</keyword>
<keyword id="KW-1133">Transmembrane helix</keyword>
<dbReference type="EMBL" id="M23693">
    <property type="status" value="NOT_ANNOTATED_CDS"/>
    <property type="molecule type" value="Genomic_DNA"/>
</dbReference>
<dbReference type="EMBL" id="M35682">
    <property type="protein sequence ID" value="AAA39595.1"/>
    <property type="molecule type" value="Genomic_DNA"/>
</dbReference>
<dbReference type="EMBL" id="M35680">
    <property type="protein sequence ID" value="AAA39595.1"/>
    <property type="status" value="JOINED"/>
    <property type="molecule type" value="Genomic_DNA"/>
</dbReference>
<dbReference type="EMBL" id="M35681">
    <property type="protein sequence ID" value="AAA39595.1"/>
    <property type="status" value="JOINED"/>
    <property type="molecule type" value="Genomic_DNA"/>
</dbReference>
<dbReference type="PIR" id="A30529">
    <property type="entry name" value="A30529"/>
</dbReference>
<dbReference type="SMR" id="P20040"/>
<dbReference type="FunCoup" id="P20040">
    <property type="interactions" value="92"/>
</dbReference>
<dbReference type="GlyGen" id="P20040">
    <property type="glycosylation" value="1 site"/>
</dbReference>
<dbReference type="PhosphoSitePlus" id="P20040"/>
<dbReference type="InParanoid" id="P20040"/>
<dbReference type="Proteomes" id="UP000000589">
    <property type="component" value="Unplaced"/>
</dbReference>
<dbReference type="RNAct" id="P20040">
    <property type="molecule type" value="protein"/>
</dbReference>
<dbReference type="GO" id="GO:0031902">
    <property type="term" value="C:late endosome membrane"/>
    <property type="evidence" value="ECO:0000318"/>
    <property type="project" value="GO_Central"/>
</dbReference>
<dbReference type="GO" id="GO:0005765">
    <property type="term" value="C:lysosomal membrane"/>
    <property type="evidence" value="ECO:0000318"/>
    <property type="project" value="GO_Central"/>
</dbReference>
<dbReference type="GO" id="GO:0042613">
    <property type="term" value="C:MHC class II protein complex"/>
    <property type="evidence" value="ECO:0000318"/>
    <property type="project" value="GO_Central"/>
</dbReference>
<dbReference type="GO" id="GO:0023026">
    <property type="term" value="F:MHC class II protein complex binding"/>
    <property type="evidence" value="ECO:0000318"/>
    <property type="project" value="GO_Central"/>
</dbReference>
<dbReference type="GO" id="GO:0042605">
    <property type="term" value="F:peptide antigen binding"/>
    <property type="evidence" value="ECO:0000318"/>
    <property type="project" value="GO_Central"/>
</dbReference>
<dbReference type="GO" id="GO:0002250">
    <property type="term" value="P:adaptive immune response"/>
    <property type="evidence" value="ECO:0007669"/>
    <property type="project" value="UniProtKB-KW"/>
</dbReference>
<dbReference type="GO" id="GO:0019886">
    <property type="term" value="P:antigen processing and presentation of exogenous peptide antigen via MHC class II"/>
    <property type="evidence" value="ECO:0000318"/>
    <property type="project" value="GO_Central"/>
</dbReference>
<dbReference type="GO" id="GO:0002503">
    <property type="term" value="P:peptide antigen assembly with MHC class II protein complex"/>
    <property type="evidence" value="ECO:0000318"/>
    <property type="project" value="GO_Central"/>
</dbReference>
<dbReference type="GO" id="GO:0050778">
    <property type="term" value="P:positive regulation of immune response"/>
    <property type="evidence" value="ECO:0000318"/>
    <property type="project" value="GO_Central"/>
</dbReference>
<dbReference type="GO" id="GO:0050870">
    <property type="term" value="P:positive regulation of T cell activation"/>
    <property type="evidence" value="ECO:0000318"/>
    <property type="project" value="GO_Central"/>
</dbReference>
<dbReference type="CDD" id="cd20998">
    <property type="entry name" value="IgC1_MHC_II_beta_I-E"/>
    <property type="match status" value="1"/>
</dbReference>
<dbReference type="FunFam" id="2.60.40.10:FF:000116">
    <property type="entry name" value="HLA class II histocompatibility antigen, DRB1-1 beta chain"/>
    <property type="match status" value="1"/>
</dbReference>
<dbReference type="FunFam" id="3.10.320.10:FF:000001">
    <property type="entry name" value="HLA class II histocompatibility antigen, DRB1-1 beta chain"/>
    <property type="match status" value="1"/>
</dbReference>
<dbReference type="Gene3D" id="3.10.320.10">
    <property type="entry name" value="Class II Histocompatibility Antigen, M Beta Chain, Chain B, domain 1"/>
    <property type="match status" value="1"/>
</dbReference>
<dbReference type="Gene3D" id="2.60.40.10">
    <property type="entry name" value="Immunoglobulins"/>
    <property type="match status" value="1"/>
</dbReference>
<dbReference type="InterPro" id="IPR007110">
    <property type="entry name" value="Ig-like_dom"/>
</dbReference>
<dbReference type="InterPro" id="IPR036179">
    <property type="entry name" value="Ig-like_dom_sf"/>
</dbReference>
<dbReference type="InterPro" id="IPR013783">
    <property type="entry name" value="Ig-like_fold"/>
</dbReference>
<dbReference type="InterPro" id="IPR003006">
    <property type="entry name" value="Ig/MHC_CS"/>
</dbReference>
<dbReference type="InterPro" id="IPR003597">
    <property type="entry name" value="Ig_C1-set"/>
</dbReference>
<dbReference type="InterPro" id="IPR050160">
    <property type="entry name" value="MHC/Immunoglobulin"/>
</dbReference>
<dbReference type="InterPro" id="IPR011162">
    <property type="entry name" value="MHC_I/II-like_Ag-recog"/>
</dbReference>
<dbReference type="InterPro" id="IPR014745">
    <property type="entry name" value="MHC_II_a/b_N"/>
</dbReference>
<dbReference type="InterPro" id="IPR000353">
    <property type="entry name" value="MHC_II_b_N"/>
</dbReference>
<dbReference type="PANTHER" id="PTHR19944:SF99">
    <property type="entry name" value="HLA CLASS II HISTOCOMPATIBILITY ANTIGEN, DRB1 BETA CHAIN"/>
    <property type="match status" value="1"/>
</dbReference>
<dbReference type="PANTHER" id="PTHR19944">
    <property type="entry name" value="MHC CLASS II-RELATED"/>
    <property type="match status" value="1"/>
</dbReference>
<dbReference type="Pfam" id="PF07654">
    <property type="entry name" value="C1-set"/>
    <property type="match status" value="1"/>
</dbReference>
<dbReference type="Pfam" id="PF00969">
    <property type="entry name" value="MHC_II_beta"/>
    <property type="match status" value="1"/>
</dbReference>
<dbReference type="SMART" id="SM00407">
    <property type="entry name" value="IGc1"/>
    <property type="match status" value="1"/>
</dbReference>
<dbReference type="SMART" id="SM00921">
    <property type="entry name" value="MHC_II_beta"/>
    <property type="match status" value="1"/>
</dbReference>
<dbReference type="SUPFAM" id="SSF48726">
    <property type="entry name" value="Immunoglobulin"/>
    <property type="match status" value="1"/>
</dbReference>
<dbReference type="SUPFAM" id="SSF54452">
    <property type="entry name" value="MHC antigen-recognition domain"/>
    <property type="match status" value="1"/>
</dbReference>
<dbReference type="PROSITE" id="PS50835">
    <property type="entry name" value="IG_LIKE"/>
    <property type="match status" value="1"/>
</dbReference>
<dbReference type="PROSITE" id="PS00290">
    <property type="entry name" value="IG_MHC"/>
    <property type="match status" value="1"/>
</dbReference>
<name>HB24_MOUSE</name>
<reference key="1">
    <citation type="journal article" date="1988" name="J. Immunol.">
        <title>Molecular basis for the defective expression of the mouse Ew17 beta gene.</title>
        <authorList>
            <person name="Vu T.H."/>
            <person name="Tacchini-Cottier F.M."/>
            <person name="Day C.E."/>
            <person name="Begovich A.B."/>
            <person name="Jones P.P."/>
        </authorList>
    </citation>
    <scope>NUCLEOTIDE SEQUENCE [GENOMIC DNA]</scope>
</reference>
<reference key="2">
    <citation type="journal article" date="1990" name="J. Immunol.">
        <title>Characterization of the molecular defects in the mouse E beta f and E beta q genes. Implications for the origin of MHC polymorphism.</title>
        <authorList>
            <person name="Begovich A.B."/>
            <person name="Vu T.H."/>
            <person name="Jones P.P."/>
        </authorList>
    </citation>
    <scope>NUCLEOTIDE SEQUENCE [GENOMIC DNA]</scope>
</reference>
<reference key="3">
    <citation type="journal article" date="2010" name="Cell">
        <title>A tissue-specific atlas of mouse protein phosphorylation and expression.</title>
        <authorList>
            <person name="Huttlin E.L."/>
            <person name="Jedrychowski M.P."/>
            <person name="Elias J.E."/>
            <person name="Goswami T."/>
            <person name="Rad R."/>
            <person name="Beausoleil S.A."/>
            <person name="Villen J."/>
            <person name="Haas W."/>
            <person name="Sowa M.E."/>
            <person name="Gygi S.P."/>
        </authorList>
    </citation>
    <scope>IDENTIFICATION BY MASS SPECTROMETRY [LARGE SCALE ANALYSIS]</scope>
    <source>
        <tissue>Lung</tissue>
        <tissue>Spleen</tissue>
    </source>
</reference>
<comment type="subcellular location">
    <subcellularLocation>
        <location evidence="3">Membrane</location>
        <topology evidence="3">Single-pass type I membrane protein</topology>
    </subcellularLocation>
</comment>
<comment type="similarity">
    <text evidence="3">Belongs to the MHC class II family.</text>
</comment>
<sequence length="264" mass="30205">MVWLPRVPCVAAVILLLTVLSPPVALVRDSRPWFLEYCKSECHFYNGTQRVRFLKRYFYNLEENLRFDSDVGEFRAVTELGRPDAENWNSQPEILEQKRAAVDTYCRHNYEIFDNFLVRRRVEPTVTVYPTKTQPLEHHNLLVCSVSDFYPGNIEVRWFRNGKEEKTGIVSTGLVRNGDWTFQTLVMLETVPQSGEVYTCQVEHPSLTDPVTVEWKAQSTSAQNKMLSGVGGFVLGLLFLGAGLFIYFRNQKGQSGLQPTGLLS</sequence>
<evidence type="ECO:0000255" key="1"/>
<evidence type="ECO:0000255" key="2">
    <source>
        <dbReference type="PROSITE-ProRule" id="PRU00114"/>
    </source>
</evidence>
<evidence type="ECO:0000305" key="3"/>
<organism>
    <name type="scientific">Mus musculus</name>
    <name type="common">Mouse</name>
    <dbReference type="NCBI Taxonomy" id="10090"/>
    <lineage>
        <taxon>Eukaryota</taxon>
        <taxon>Metazoa</taxon>
        <taxon>Chordata</taxon>
        <taxon>Craniata</taxon>
        <taxon>Vertebrata</taxon>
        <taxon>Euteleostomi</taxon>
        <taxon>Mammalia</taxon>
        <taxon>Eutheria</taxon>
        <taxon>Euarchontoglires</taxon>
        <taxon>Glires</taxon>
        <taxon>Rodentia</taxon>
        <taxon>Myomorpha</taxon>
        <taxon>Muroidea</taxon>
        <taxon>Muridae</taxon>
        <taxon>Murinae</taxon>
        <taxon>Mus</taxon>
        <taxon>Mus</taxon>
    </lineage>
</organism>
<protein>
    <recommendedName>
        <fullName>H-2 class II histocompatibility antigen, E-Q beta chain</fullName>
    </recommendedName>
    <alternativeName>
        <fullName>E-W17</fullName>
    </alternativeName>
</protein>
<proteinExistence type="evidence at protein level"/>